<reference key="1">
    <citation type="journal article" date="1998" name="Biochem. Biophys. Res. Commun.">
        <title>Cloning and characterization of three human cDNAs encoding mRNA (guanine-7-)methyltransferase, an mRNA cap methylase.</title>
        <authorList>
            <person name="Tsukamoto T."/>
            <person name="Shibagaki Y."/>
            <person name="Niikura Y."/>
            <person name="Kiyohisa M."/>
        </authorList>
    </citation>
    <scope>NUCLEOTIDE SEQUENCE [MRNA] (ISOFORMS 1 AND 2)</scope>
    <scope>FUNCTION</scope>
    <scope>CATALYTIC ACTIVITY</scope>
    <scope>TISSUE SPECIFICITY</scope>
</reference>
<reference key="2">
    <citation type="journal article" date="1998" name="J. Biol. Chem.">
        <title>Recombinant human mRNA cap methyltransferase binds capping enzyme/RNA polymerase IIo complexes.</title>
        <authorList>
            <person name="Pillutla R.C."/>
            <person name="Yue Z."/>
            <person name="Maldonado E."/>
            <person name="Shatkin A.J."/>
        </authorList>
    </citation>
    <scope>NUCLEOTIDE SEQUENCE [MRNA] (ISOFORM 1)</scope>
    <scope>FUNCTION</scope>
    <scope>CATALYTIC ACTIVITY</scope>
    <scope>TISSUE SPECIFICITY</scope>
    <scope>INTERACTION WITH POLYMERASE II AND RNGTT</scope>
</reference>
<reference key="3">
    <citation type="journal article" date="1999" name="Microbiology">
        <title>The Candida albicans gene for mRNA 5'-cap methyltransferase: identification of the additional residues essential for catalysis.</title>
        <authorList>
            <person name="Yamada-Okabe T."/>
            <person name="Mio T."/>
            <person name="Kashima Y."/>
            <person name="Matsui M."/>
            <person name="Arisawa M."/>
            <person name="Yamada-Okabe H."/>
        </authorList>
    </citation>
    <scope>NUCLEOTIDE SEQUENCE [MRNA] (ISOFORM 1)</scope>
</reference>
<reference key="4">
    <citation type="journal article" date="1997" name="DNA Res.">
        <title>Prediction of the coding sequences of unidentified human genes. VIII. 78 new cDNA clones from brain which code for large proteins in vitro.</title>
        <authorList>
            <person name="Ishikawa K."/>
            <person name="Nagase T."/>
            <person name="Nakajima D."/>
            <person name="Seki N."/>
            <person name="Ohira M."/>
            <person name="Miyajima N."/>
            <person name="Tanaka A."/>
            <person name="Kotani H."/>
            <person name="Nomura N."/>
            <person name="Ohara O."/>
        </authorList>
    </citation>
    <scope>NUCLEOTIDE SEQUENCE [LARGE SCALE MRNA] (ISOFORM 1)</scope>
    <source>
        <tissue>Brain</tissue>
    </source>
</reference>
<reference key="5">
    <citation type="submission" date="2007-02" db="EMBL/GenBank/DDBJ databases">
        <authorList>
            <consortium name="NHLBI resequencing and genotyping service (RS&amp;G)"/>
        </authorList>
    </citation>
    <scope>NUCLEOTIDE SEQUENCE [GENOMIC DNA]</scope>
</reference>
<reference key="6">
    <citation type="submission" date="2005-09" db="EMBL/GenBank/DDBJ databases">
        <authorList>
            <person name="Mural R.J."/>
            <person name="Istrail S."/>
            <person name="Sutton G.G."/>
            <person name="Florea L."/>
            <person name="Halpern A.L."/>
            <person name="Mobarry C.M."/>
            <person name="Lippert R."/>
            <person name="Walenz B."/>
            <person name="Shatkay H."/>
            <person name="Dew I."/>
            <person name="Miller J.R."/>
            <person name="Flanigan M.J."/>
            <person name="Edwards N.J."/>
            <person name="Bolanos R."/>
            <person name="Fasulo D."/>
            <person name="Halldorsson B.V."/>
            <person name="Hannenhalli S."/>
            <person name="Turner R."/>
            <person name="Yooseph S."/>
            <person name="Lu F."/>
            <person name="Nusskern D.R."/>
            <person name="Shue B.C."/>
            <person name="Zheng X.H."/>
            <person name="Zhong F."/>
            <person name="Delcher A.L."/>
            <person name="Huson D.H."/>
            <person name="Kravitz S.A."/>
            <person name="Mouchard L."/>
            <person name="Reinert K."/>
            <person name="Remington K.A."/>
            <person name="Clark A.G."/>
            <person name="Waterman M.S."/>
            <person name="Eichler E.E."/>
            <person name="Adams M.D."/>
            <person name="Hunkapiller M.W."/>
            <person name="Myers E.W."/>
            <person name="Venter J.C."/>
        </authorList>
    </citation>
    <scope>NUCLEOTIDE SEQUENCE [LARGE SCALE GENOMIC DNA]</scope>
</reference>
<reference key="7">
    <citation type="journal article" date="2004" name="Genome Res.">
        <title>The status, quality, and expansion of the NIH full-length cDNA project: the Mammalian Gene Collection (MGC).</title>
        <authorList>
            <consortium name="The MGC Project Team"/>
        </authorList>
    </citation>
    <scope>NUCLEOTIDE SEQUENCE [LARGE SCALE MRNA] (ISOFORM 1)</scope>
    <source>
        <tissue>Ovary</tissue>
    </source>
</reference>
<reference key="8">
    <citation type="journal article" date="1999" name="J. Biol. Chem.">
        <title>Characterization of human, Schizosaccharomyces pombe, and Candida albicans mRNA cap methyltransferases and complete replacement of the yeast capping apparatus by mammalian enzymes.</title>
        <authorList>
            <person name="Saha N."/>
            <person name="Schwer B."/>
            <person name="Shuman S."/>
        </authorList>
    </citation>
    <scope>FUNCTION</scope>
    <scope>CATALYTIC ACTIVITY</scope>
    <scope>MUTAGENESIS OF ASP-203; ARG-239; TYR-289; PHE-291 AND PHE-354</scope>
</reference>
<reference key="9">
    <citation type="journal article" date="2000" name="Genes Dev.">
        <title>Cap methyltransferase selective binding and methylation of GpppG-RNA are stimulated by importin-alpha.</title>
        <authorList>
            <person name="Wen Y."/>
            <person name="Shatkin A.J."/>
        </authorList>
    </citation>
    <scope>SUBCELLULAR LOCATION</scope>
    <scope>RNA-BINDING</scope>
    <scope>INTERACTION WITH IMPORTIN ALPHA</scope>
</reference>
<reference key="10">
    <citation type="journal article" date="2005" name="Mol. Cell. Biol.">
        <title>Human mRNA cap methyltransferase: alternative nuclear localization signal motifs ensure nuclear localization required for viability.</title>
        <authorList>
            <person name="Shafer B."/>
            <person name="Chu C."/>
            <person name="Shatkin A.J."/>
        </authorList>
    </citation>
    <scope>SUBCELLULAR LOCATION</scope>
    <scope>MUTAGENESIS OF 80-LYS--LYS-83; 103-LYS--ARG-107 AND ARG-127</scope>
</reference>
<reference key="11">
    <citation type="journal article" date="2011" name="BMC Syst. Biol.">
        <title>Initial characterization of the human central proteome.</title>
        <authorList>
            <person name="Burkard T.R."/>
            <person name="Planyavsky M."/>
            <person name="Kaupe I."/>
            <person name="Breitwieser F.P."/>
            <person name="Buerckstuemmer T."/>
            <person name="Bennett K.L."/>
            <person name="Superti-Furga G."/>
            <person name="Colinge J."/>
        </authorList>
    </citation>
    <scope>IDENTIFICATION BY MASS SPECTROMETRY [LARGE SCALE ANALYSIS]</scope>
</reference>
<reference key="12">
    <citation type="journal article" date="2011" name="Mol. Cell">
        <title>RAM/Fam103a1 is required for mRNA cap methylation.</title>
        <authorList>
            <person name="Gonatopoulos-Pournatzis T."/>
            <person name="Dunn S."/>
            <person name="Bounds R."/>
            <person name="Cowling V.H."/>
        </authorList>
    </citation>
    <scope>FUNCTION</scope>
    <scope>SUBUNIT</scope>
    <scope>INTERACTION WITH RAMAC</scope>
</reference>
<reference key="13">
    <citation type="submission" date="2007-11" db="PDB data bank">
        <title>The crystal structure of human RNA (guanine-7-) methyltransferase in complex with SAH.</title>
        <authorList>
            <person name="Wu H."/>
            <person name="Lunin V.V."/>
            <person name="Zeng H."/>
            <person name="Antoshenko T."/>
            <person name="MacKenzie F."/>
            <person name="Weigelt J."/>
            <person name="Arrowsmith C.H."/>
            <person name="Edwards A.M."/>
            <person name="Bochkarev A."/>
            <person name="Min J."/>
            <person name="Plotnikov A.N."/>
        </authorList>
    </citation>
    <scope>X-RAY CRYSTALLOGRAPHY (2.30 ANGSTROMS) OF 165-476 IN COMPLEX WITH S-ADENOSYL-L-METHIONINE</scope>
</reference>
<reference key="14">
    <citation type="submission" date="2008-09" db="PDB data bank">
        <title>Crystal structure of mRNA cap guanine-N7 methyltransferase (RNMT) in complex with sinefungin.</title>
        <authorList>
            <person name="Zeng H."/>
            <person name="Amaya M.F."/>
            <person name="Loppnau P."/>
            <person name="Bountra C."/>
            <person name="Weigelt J."/>
            <person name="Arrowsmith C.H."/>
            <person name="Edwards A.M."/>
            <person name="Botchkarev A."/>
            <person name="Min J."/>
            <person name="Plotnikov A.N."/>
            <person name="Wu H."/>
        </authorList>
    </citation>
    <scope>X-RAY CRYSTALLOGRAPHY (2.41 ANGSTROMS) OF 165-476</scope>
</reference>
<reference key="15">
    <citation type="journal article" date="2016" name="Nucleic Acids Res.">
        <title>Molecular basis of RNA guanine-7 methyltransferase (RNMT) activation by RAM.</title>
        <authorList>
            <person name="Varshney D."/>
            <person name="Petit A.P."/>
            <person name="Bueren-Calabuig J.A."/>
            <person name="Jansen C."/>
            <person name="Fletcher D.A."/>
            <person name="Peggie M."/>
            <person name="Weidlich S."/>
            <person name="Scullion P."/>
            <person name="Pisliakov A.V."/>
            <person name="Cowling V.H."/>
        </authorList>
    </citation>
    <scope>X-RAY CRYSTALLOGRAPHY (2.28 ANGSTROMS) OF 167-476 IN COMPLEX WITH RAMAC AND S-ADENOSYL-L-HOMOCYSTEINE</scope>
    <scope>CATALYTIC ACTIVITY</scope>
    <scope>ACTIVITY REGULATION</scope>
    <scope>INTERACTION WITH RAMAC</scope>
    <scope>MUTAGENESIS OF TRP-178; LYS-393; PHE-398; LYS-409; LYS-413; ALA-417; ARG-450 AND PRO-452</scope>
</reference>
<evidence type="ECO:0000250" key="1">
    <source>
        <dbReference type="UniProtKB" id="Q5U2U7"/>
    </source>
</evidence>
<evidence type="ECO:0000250" key="2">
    <source>
        <dbReference type="UniProtKB" id="Q9D0L8"/>
    </source>
</evidence>
<evidence type="ECO:0000255" key="3">
    <source>
        <dbReference type="PROSITE-ProRule" id="PRU00895"/>
    </source>
</evidence>
<evidence type="ECO:0000256" key="4">
    <source>
        <dbReference type="SAM" id="MobiDB-lite"/>
    </source>
</evidence>
<evidence type="ECO:0000269" key="5">
    <source>
    </source>
</evidence>
<evidence type="ECO:0000269" key="6">
    <source>
    </source>
</evidence>
<evidence type="ECO:0000269" key="7">
    <source>
    </source>
</evidence>
<evidence type="ECO:0000269" key="8">
    <source>
    </source>
</evidence>
<evidence type="ECO:0000269" key="9">
    <source>
    </source>
</evidence>
<evidence type="ECO:0000269" key="10">
    <source>
    </source>
</evidence>
<evidence type="ECO:0000269" key="11">
    <source>
    </source>
</evidence>
<evidence type="ECO:0000269" key="12">
    <source ref="14"/>
</evidence>
<evidence type="ECO:0000303" key="13">
    <source>
    </source>
</evidence>
<evidence type="ECO:0000305" key="14"/>
<evidence type="ECO:0007744" key="15">
    <source>
        <dbReference type="PDB" id="3BGV"/>
    </source>
</evidence>
<evidence type="ECO:0007744" key="16">
    <source>
        <dbReference type="PDB" id="5E9J"/>
    </source>
</evidence>
<evidence type="ECO:0007744" key="17">
    <source>
        <dbReference type="PDB" id="5E9W"/>
    </source>
</evidence>
<evidence type="ECO:0007829" key="18">
    <source>
        <dbReference type="PDB" id="5E8J"/>
    </source>
</evidence>
<evidence type="ECO:0007829" key="19">
    <source>
        <dbReference type="PDB" id="5E9W"/>
    </source>
</evidence>
<feature type="chain" id="PRO_0000248321" description="mRNA cap guanine-N(7) methyltransferase">
    <location>
        <begin position="1"/>
        <end position="476"/>
    </location>
</feature>
<feature type="domain" description="mRNA cap 0 methyltransferase" evidence="3">
    <location>
        <begin position="167"/>
        <end position="475"/>
    </location>
</feature>
<feature type="region of interest" description="Disordered" evidence="4">
    <location>
        <begin position="1"/>
        <end position="146"/>
    </location>
</feature>
<feature type="short sequence motif" description="Nuclear localization signal">
    <location>
        <begin position="126"/>
        <end position="128"/>
    </location>
</feature>
<feature type="compositionally biased region" description="Basic and acidic residues" evidence="4">
    <location>
        <begin position="1"/>
        <end position="14"/>
    </location>
</feature>
<feature type="compositionally biased region" description="Polar residues" evidence="4">
    <location>
        <begin position="20"/>
        <end position="50"/>
    </location>
</feature>
<feature type="compositionally biased region" description="Basic and acidic residues" evidence="4">
    <location>
        <begin position="54"/>
        <end position="68"/>
    </location>
</feature>
<feature type="compositionally biased region" description="Basic and acidic residues" evidence="4">
    <location>
        <begin position="84"/>
        <end position="118"/>
    </location>
</feature>
<feature type="compositionally biased region" description="Basic and acidic residues" evidence="4">
    <location>
        <begin position="129"/>
        <end position="145"/>
    </location>
</feature>
<feature type="binding site" evidence="3">
    <location>
        <begin position="176"/>
        <end position="177"/>
    </location>
    <ligand>
        <name>mRNA</name>
        <dbReference type="ChEBI" id="CHEBI:33699"/>
    </ligand>
    <ligandPart>
        <name>mRNA cap</name>
    </ligandPart>
</feature>
<feature type="binding site" evidence="3 9 15 16 17">
    <location>
        <position position="180"/>
    </location>
    <ligand>
        <name>S-adenosyl-L-methionine</name>
        <dbReference type="ChEBI" id="CHEBI:59789"/>
    </ligand>
</feature>
<feature type="binding site" evidence="3 9 15 16 17">
    <location>
        <position position="205"/>
    </location>
    <ligand>
        <name>S-adenosyl-L-methionine</name>
        <dbReference type="ChEBI" id="CHEBI:59789"/>
    </ligand>
</feature>
<feature type="binding site" evidence="3 9 15 16 17">
    <location>
        <position position="227"/>
    </location>
    <ligand>
        <name>S-adenosyl-L-methionine</name>
        <dbReference type="ChEBI" id="CHEBI:59789"/>
    </ligand>
</feature>
<feature type="binding site" evidence="9 15 16 17">
    <location>
        <position position="261"/>
    </location>
    <ligand>
        <name>S-adenosyl-L-methionine</name>
        <dbReference type="ChEBI" id="CHEBI:59789"/>
    </ligand>
</feature>
<feature type="binding site" evidence="9 15 16 17">
    <location>
        <position position="284"/>
    </location>
    <ligand>
        <name>S-adenosyl-L-methionine</name>
        <dbReference type="ChEBI" id="CHEBI:59789"/>
    </ligand>
</feature>
<feature type="binding site" evidence="9 15 16 17">
    <location>
        <position position="289"/>
    </location>
    <ligand>
        <name>S-adenosyl-L-methionine</name>
        <dbReference type="ChEBI" id="CHEBI:59789"/>
    </ligand>
</feature>
<feature type="site" description="mRNA cap binding" evidence="3">
    <location>
        <position position="208"/>
    </location>
</feature>
<feature type="site" description="mRNA cap binding" evidence="3">
    <location>
        <position position="214"/>
    </location>
</feature>
<feature type="site" description="mRNA cap binding" evidence="3">
    <location>
        <position position="239"/>
    </location>
</feature>
<feature type="site" description="mRNA cap binding" evidence="3">
    <location>
        <position position="288"/>
    </location>
</feature>
<feature type="site" description="mRNA cap binding" evidence="3">
    <location>
        <position position="370"/>
    </location>
</feature>
<feature type="site" description="mRNA cap binding" evidence="3">
    <location>
        <position position="467"/>
    </location>
</feature>
<feature type="modified residue" description="Phosphoserine" evidence="2">
    <location>
        <position position="24"/>
    </location>
</feature>
<feature type="modified residue" description="Phosphoserine" evidence="2">
    <location>
        <position position="28"/>
    </location>
</feature>
<feature type="modified residue" description="Phosphoserine" evidence="1">
    <location>
        <position position="29"/>
    </location>
</feature>
<feature type="modified residue" description="Phosphoserine" evidence="1">
    <location>
        <position position="118"/>
    </location>
</feature>
<feature type="splice variant" id="VSP_020241" description="In isoform 2." evidence="13">
    <original>SIYLVFAFEKQQ</original>
    <variation>RLTVTIMREAWLSTVGPGRAPVAASSVKWGTPRPAMQFIL</variation>
    <location>
        <begin position="465"/>
        <end position="476"/>
    </location>
</feature>
<feature type="mutagenesis site" description="Does not abolish nuclear localization. Abolishes nuclear localization; when associated with 103-AAAAA-107 and I-127." evidence="7">
    <original>KKRK</original>
    <variation>AAAA</variation>
    <location>
        <begin position="80"/>
        <end position="83"/>
    </location>
</feature>
<feature type="mutagenesis site" description="Does not abolish nuclear localization. Abolishes nuclear localization; when associated with 80-AAAA-83 and I-127." evidence="7">
    <original>KKRKR</original>
    <variation>AAAAA</variation>
    <location>
        <begin position="103"/>
        <end position="107"/>
    </location>
</feature>
<feature type="mutagenesis site" description="Does not abolish nuclear localization. Abolishes nuclear localization; when associated with 80-AAAA-83 and 103-AAAAA-107." evidence="7">
    <original>R</original>
    <variation>I</variation>
    <location>
        <position position="127"/>
    </location>
</feature>
<feature type="mutagenesis site" description="Loss of methyltransferase activity in presence or absence of RAMAC; when associated with C-417. Complete restored RAMAC-mediated methyltransferase activity under reducing conditions; when associated with C-417. Loss of methyltransferase activity in presence or absence of RAMAC; when associated with C-417; C-393 and C-398. Partially restored RAMAC-mediated methyltransferase activity under reducing conditions; when associated with C-417; C-393 and C-398." evidence="9">
    <original>W</original>
    <variation>C</variation>
    <location>
        <position position="178"/>
    </location>
</feature>
<feature type="mutagenesis site" description="Loss of activity." evidence="5">
    <original>D</original>
    <variation>A</variation>
    <location>
        <position position="203"/>
    </location>
</feature>
<feature type="mutagenesis site" description="Loss of activity." evidence="5">
    <original>R</original>
    <variation>A</variation>
    <location>
        <position position="239"/>
    </location>
</feature>
<feature type="mutagenesis site" description="Loss of activity." evidence="5">
    <original>Y</original>
    <variation>A</variation>
    <location>
        <position position="289"/>
    </location>
</feature>
<feature type="mutagenesis site" description="Strongly impairs enzyme activity." evidence="5">
    <original>F</original>
    <variation>A</variation>
    <location>
        <position position="291"/>
    </location>
</feature>
<feature type="mutagenesis site" description="Loss of activity." evidence="5">
    <original>F</original>
    <variation>A</variation>
    <location>
        <position position="354"/>
    </location>
</feature>
<feature type="mutagenesis site" description="Loss of methyltransferase activity in presence or absence of RAMAC; when associated with C-178; C-398 and C-417. Partially restored RAMAC-mediated methyltransferase activity under reducing conditions; when associated with C-178; C-398 and C-417." evidence="9">
    <original>K</original>
    <variation>C</variation>
    <location>
        <position position="393"/>
    </location>
</feature>
<feature type="mutagenesis site" description="Loss of methyltransferase activity in presence or absence of RAMAC; when associated with C-178; C-393 and C-417. Partially restored RAMAC-mediated methyltransferase activity under reducing conditions; when associated with C-178; C-393 and C-417." evidence="9">
    <original>F</original>
    <variation>C</variation>
    <location>
        <position position="398"/>
    </location>
</feature>
<feature type="mutagenesis site" description="Decreased S-adenosyl-L-methionine binding and methyltransferase activity in absence of RAMAC; when associated with E-413. Decreased interaction with RAMAC; when associated with E-413." evidence="9">
    <original>K</original>
    <variation>E</variation>
    <location>
        <position position="409"/>
    </location>
</feature>
<feature type="mutagenesis site" description="Decreased S-adenosyl-L-methionine binding and methyltransferase activity in absence of RAMAC; when associated with E-409. Decreased interaction with RAMAC; when associated with E-409." evidence="9">
    <original>K</original>
    <variation>E</variation>
    <location>
        <position position="413"/>
    </location>
</feature>
<feature type="mutagenesis site" description="Loss of methyltransferase activity in presence or absence of RAMAC; when associated with C-178. Complete restored RAMAC-mediated methyltransferase activity under reducing conditions; when associated with C-178. Loss of methyltransferase activity in presence or absence of RAMAC; when associated with C-178. Loss of methyltransferase activity in presence or absence of RAMAC; when associated with C-178; C-393 and C-398. Partially restored RAMAC-mediated methyltransferase activity under reducing conditions; when associated with C-178; C-393 and C-398." evidence="9">
    <original>A</original>
    <variation>C</variation>
    <location>
        <position position="417"/>
    </location>
</feature>
<feature type="mutagenesis site" description="Increased S-adenosyl-L-methionine binding and methyltransferase activity in absence of RAMAC; when associated with E-452. No change in interaction with RAMAC; when associated with E-452." evidence="9">
    <original>R</original>
    <variation>E</variation>
    <location>
        <position position="450"/>
    </location>
</feature>
<feature type="mutagenesis site" description="Increased S-adenosyl-L-methionine binding and methyltransferase activity in absence of RAMAC; when associated with E-450. No change in interaction with RAMAC; when associated with E-450." evidence="9">
    <original>P</original>
    <variation>E</variation>
    <location>
        <position position="452"/>
    </location>
</feature>
<feature type="sequence conflict" description="In Ref. 3; BAA82447." evidence="14" ref="3">
    <original>M</original>
    <variation>I</variation>
    <location>
        <position position="179"/>
    </location>
</feature>
<feature type="helix" evidence="19">
    <location>
        <begin position="170"/>
        <end position="193"/>
    </location>
</feature>
<feature type="strand" evidence="19">
    <location>
        <begin position="200"/>
        <end position="204"/>
    </location>
</feature>
<feature type="turn" evidence="19">
    <location>
        <begin position="207"/>
        <end position="211"/>
    </location>
</feature>
<feature type="helix" evidence="19">
    <location>
        <begin position="212"/>
        <end position="217"/>
    </location>
</feature>
<feature type="strand" evidence="19">
    <location>
        <begin position="221"/>
        <end position="228"/>
    </location>
</feature>
<feature type="helix" evidence="19">
    <location>
        <begin position="230"/>
        <end position="244"/>
    </location>
</feature>
<feature type="strand" evidence="19">
    <location>
        <begin position="245"/>
        <end position="248"/>
    </location>
</feature>
<feature type="strand" evidence="19">
    <location>
        <begin position="254"/>
        <end position="259"/>
    </location>
</feature>
<feature type="turn" evidence="19">
    <location>
        <begin position="262"/>
        <end position="264"/>
    </location>
</feature>
<feature type="helix" evidence="19">
    <location>
        <begin position="267"/>
        <end position="269"/>
    </location>
</feature>
<feature type="strand" evidence="18">
    <location>
        <begin position="271"/>
        <end position="273"/>
    </location>
</feature>
<feature type="strand" evidence="19">
    <location>
        <begin position="278"/>
        <end position="285"/>
    </location>
</feature>
<feature type="helix" evidence="19">
    <location>
        <begin position="287"/>
        <end position="292"/>
    </location>
</feature>
<feature type="helix" evidence="19">
    <location>
        <begin position="294"/>
        <end position="305"/>
    </location>
</feature>
<feature type="strand" evidence="19">
    <location>
        <begin position="308"/>
        <end position="319"/>
    </location>
</feature>
<feature type="helix" evidence="19">
    <location>
        <begin position="321"/>
        <end position="330"/>
    </location>
</feature>
<feature type="strand" evidence="19">
    <location>
        <begin position="331"/>
        <end position="337"/>
    </location>
</feature>
<feature type="strand" evidence="19">
    <location>
        <begin position="339"/>
        <end position="346"/>
    </location>
</feature>
<feature type="strand" evidence="19">
    <location>
        <begin position="357"/>
        <end position="362"/>
    </location>
</feature>
<feature type="turn" evidence="18">
    <location>
        <begin position="363"/>
        <end position="365"/>
    </location>
</feature>
<feature type="strand" evidence="19">
    <location>
        <begin position="368"/>
        <end position="371"/>
    </location>
</feature>
<feature type="helix" evidence="19">
    <location>
        <begin position="375"/>
        <end position="382"/>
    </location>
</feature>
<feature type="helix" evidence="19">
    <location>
        <begin position="383"/>
        <end position="385"/>
    </location>
</feature>
<feature type="strand" evidence="19">
    <location>
        <begin position="387"/>
        <end position="394"/>
    </location>
</feature>
<feature type="helix" evidence="19">
    <location>
        <begin position="395"/>
        <end position="402"/>
    </location>
</feature>
<feature type="helix" evidence="19">
    <location>
        <begin position="406"/>
        <end position="414"/>
    </location>
</feature>
<feature type="strand" evidence="18">
    <location>
        <begin position="418"/>
        <end position="422"/>
    </location>
</feature>
<feature type="turn" evidence="18">
    <location>
        <begin position="434"/>
        <end position="437"/>
    </location>
</feature>
<feature type="helix" evidence="18">
    <location>
        <begin position="438"/>
        <end position="443"/>
    </location>
</feature>
<feature type="strand" evidence="19">
    <location>
        <begin position="453"/>
        <end position="456"/>
    </location>
</feature>
<feature type="helix" evidence="19">
    <location>
        <begin position="458"/>
        <end position="464"/>
    </location>
</feature>
<feature type="strand" evidence="19">
    <location>
        <begin position="467"/>
        <end position="474"/>
    </location>
</feature>
<organism>
    <name type="scientific">Homo sapiens</name>
    <name type="common">Human</name>
    <dbReference type="NCBI Taxonomy" id="9606"/>
    <lineage>
        <taxon>Eukaryota</taxon>
        <taxon>Metazoa</taxon>
        <taxon>Chordata</taxon>
        <taxon>Craniata</taxon>
        <taxon>Vertebrata</taxon>
        <taxon>Euteleostomi</taxon>
        <taxon>Mammalia</taxon>
        <taxon>Eutheria</taxon>
        <taxon>Euarchontoglires</taxon>
        <taxon>Primates</taxon>
        <taxon>Haplorrhini</taxon>
        <taxon>Catarrhini</taxon>
        <taxon>Hominidae</taxon>
        <taxon>Homo</taxon>
    </lineage>
</organism>
<protein>
    <recommendedName>
        <fullName>mRNA cap guanine-N(7) methyltransferase</fullName>
        <ecNumber evidence="5 9 10 11">2.1.1.56</ecNumber>
    </recommendedName>
    <alternativeName>
        <fullName>RG7MT1</fullName>
    </alternativeName>
    <alternativeName>
        <fullName>mRNA (guanine-N(7))-methyltransferase</fullName>
    </alternativeName>
    <alternativeName>
        <fullName>mRNA cap methyltransferase</fullName>
        <shortName>hCMT1</shortName>
        <shortName>hMet</shortName>
        <shortName>hcm1p</shortName>
    </alternativeName>
</protein>
<comment type="function">
    <text evidence="5 6 8 9 10 11">Catalytic subunit of the mRNA-capping methyltransferase RNMT:RAMAC complex that methylates the N7 position of the added guanosine to the 5'-cap structure of mRNAs (PubMed:10347220, PubMed:11114884, PubMed:22099306, PubMed:27422871, PubMed:9705270, PubMed:9790902). Binds RNA containing 5'-terminal GpppC (PubMed:11114884).</text>
</comment>
<comment type="catalytic activity">
    <reaction evidence="3 5 9 10 11">
        <text>a 5'-end (5'-triphosphoguanosine)-ribonucleoside in mRNA + S-adenosyl-L-methionine = a 5'-end (N(7)-methyl 5'-triphosphoguanosine)-ribonucleoside in mRNA + S-adenosyl-L-homocysteine</text>
        <dbReference type="Rhea" id="RHEA:67008"/>
        <dbReference type="Rhea" id="RHEA-COMP:17166"/>
        <dbReference type="Rhea" id="RHEA-COMP:17167"/>
        <dbReference type="ChEBI" id="CHEBI:57856"/>
        <dbReference type="ChEBI" id="CHEBI:59789"/>
        <dbReference type="ChEBI" id="CHEBI:156461"/>
        <dbReference type="ChEBI" id="CHEBI:167617"/>
        <dbReference type="EC" id="2.1.1.56"/>
    </reaction>
</comment>
<comment type="activity regulation">
    <text evidence="9">Methyltransferase activity is activated by RAMAC (PubMed:27422871).</text>
</comment>
<comment type="subunit">
    <text evidence="6 8 10 12">Interacts with importin alpha, leading to stimulate both RNA-binding and methyltransferase activity (PubMed:11114884). Interaction with importin alpha and beta is required for its nuclear localization, importin beta dissociating in response to RanGTP, allowing RNMT-importin alpha to bind RNA substrates (PubMed:11114884). Interacts with elongating form of polymerase II and RNGTT (PubMed:9705270). Interacts with RAMAC, this interaction significantly enhances RNA-binding and cap methyltransferase activity (PubMed:22099306, Ref.14).</text>
</comment>
<comment type="interaction">
    <interactant intactId="EBI-877832">
        <id>O43148</id>
    </interactant>
    <interactant intactId="EBI-2548508">
        <id>Q96IK5</id>
        <label>GMCL1</label>
    </interactant>
    <organismsDiffer>false</organismsDiffer>
    <experiments>3</experiments>
</comment>
<comment type="interaction">
    <interactant intactId="EBI-877832">
        <id>O43148</id>
    </interactant>
    <interactant intactId="EBI-349938">
        <id>P52292</id>
        <label>KPNA2</label>
    </interactant>
    <organismsDiffer>false</organismsDiffer>
    <experiments>4</experiments>
</comment>
<comment type="interaction">
    <interactant intactId="EBI-877832">
        <id>O43148</id>
    </interactant>
    <interactant intactId="EBI-359923">
        <id>O60684</id>
        <label>KPNA6</label>
    </interactant>
    <organismsDiffer>false</organismsDiffer>
    <experiments>6</experiments>
</comment>
<comment type="interaction">
    <interactant intactId="EBI-877832">
        <id>O43148</id>
    </interactant>
    <interactant intactId="EBI-11079894">
        <id>Q9HB20</id>
        <label>PLEKHA3</label>
    </interactant>
    <organismsDiffer>false</organismsDiffer>
    <experiments>3</experiments>
</comment>
<comment type="interaction">
    <interactant intactId="EBI-877832">
        <id>O43148</id>
    </interactant>
    <interactant intactId="EBI-744023">
        <id>Q9BTL3</id>
        <label>RAMAC</label>
    </interactant>
    <organismsDiffer>false</organismsDiffer>
    <experiments>9</experiments>
</comment>
<comment type="subcellular location">
    <subcellularLocation>
        <location evidence="6 7">Nucleus</location>
    </subcellularLocation>
</comment>
<comment type="alternative products">
    <event type="alternative splicing"/>
    <isoform>
        <id>O43148-1</id>
        <name>1</name>
        <name>hCMT1a</name>
        <sequence type="displayed"/>
    </isoform>
    <isoform>
        <id>O43148-2</id>
        <name>2</name>
        <name>hCMT1b</name>
        <sequence type="described" ref="VSP_020241"/>
    </isoform>
</comment>
<comment type="tissue specificity">
    <text evidence="10 11">Widely expressed.</text>
</comment>
<comment type="similarity">
    <text evidence="3">Belongs to the class I-like SAM-binding methyltransferase superfamily. mRNA cap 0 methyltransferase family.</text>
</comment>
<dbReference type="EC" id="2.1.1.56" evidence="5 9 10 11"/>
<dbReference type="EMBL" id="AB022604">
    <property type="protein sequence ID" value="BAA74464.1"/>
    <property type="molecule type" value="mRNA"/>
</dbReference>
<dbReference type="EMBL" id="AB022605">
    <property type="protein sequence ID" value="BAA74463.1"/>
    <property type="molecule type" value="mRNA"/>
</dbReference>
<dbReference type="EMBL" id="AF067791">
    <property type="protein sequence ID" value="AAC63269.1"/>
    <property type="molecule type" value="mRNA"/>
</dbReference>
<dbReference type="EMBL" id="AB020966">
    <property type="protein sequence ID" value="BAA82447.1"/>
    <property type="molecule type" value="mRNA"/>
</dbReference>
<dbReference type="EMBL" id="AB007858">
    <property type="protein sequence ID" value="BAA23694.1"/>
    <property type="molecule type" value="mRNA"/>
</dbReference>
<dbReference type="EMBL" id="EF445026">
    <property type="protein sequence ID" value="ACA06068.1"/>
    <property type="molecule type" value="Genomic_DNA"/>
</dbReference>
<dbReference type="EMBL" id="CH471113">
    <property type="protein sequence ID" value="EAX01505.1"/>
    <property type="molecule type" value="Genomic_DNA"/>
</dbReference>
<dbReference type="EMBL" id="CH471113">
    <property type="protein sequence ID" value="EAX01506.1"/>
    <property type="molecule type" value="Genomic_DNA"/>
</dbReference>
<dbReference type="EMBL" id="BC036798">
    <property type="protein sequence ID" value="AAH36798.1"/>
    <property type="molecule type" value="mRNA"/>
</dbReference>
<dbReference type="CCDS" id="CCDS11867.1">
    <molecule id="O43148-1"/>
</dbReference>
<dbReference type="CCDS" id="CCDS77156.1">
    <molecule id="O43148-2"/>
</dbReference>
<dbReference type="RefSeq" id="NP_001295192.1">
    <molecule id="O43148-2"/>
    <property type="nucleotide sequence ID" value="NM_001308263.2"/>
</dbReference>
<dbReference type="RefSeq" id="NP_001365063.1">
    <molecule id="O43148-2"/>
    <property type="nucleotide sequence ID" value="NM_001378134.1"/>
</dbReference>
<dbReference type="RefSeq" id="NP_001365064.1">
    <molecule id="O43148-1"/>
    <property type="nucleotide sequence ID" value="NM_001378135.1"/>
</dbReference>
<dbReference type="RefSeq" id="NP_003790.1">
    <molecule id="O43148-1"/>
    <property type="nucleotide sequence ID" value="NM_003799.3"/>
</dbReference>
<dbReference type="RefSeq" id="XP_005258219.1">
    <property type="nucleotide sequence ID" value="XM_005258162.1"/>
</dbReference>
<dbReference type="RefSeq" id="XP_016881550.1">
    <property type="nucleotide sequence ID" value="XM_017026061.1"/>
</dbReference>
<dbReference type="RefSeq" id="XP_047293863.1">
    <molecule id="O43148-2"/>
    <property type="nucleotide sequence ID" value="XM_047437907.1"/>
</dbReference>
<dbReference type="RefSeq" id="XP_047293864.1">
    <molecule id="O43148-1"/>
    <property type="nucleotide sequence ID" value="XM_047437908.1"/>
</dbReference>
<dbReference type="RefSeq" id="XP_054175278.1">
    <molecule id="O43148-2"/>
    <property type="nucleotide sequence ID" value="XM_054319303.1"/>
</dbReference>
<dbReference type="RefSeq" id="XP_054175279.1">
    <molecule id="O43148-1"/>
    <property type="nucleotide sequence ID" value="XM_054319304.1"/>
</dbReference>
<dbReference type="PDB" id="3BGV">
    <property type="method" value="X-ray"/>
    <property type="resolution" value="2.30 A"/>
    <property type="chains" value="A/B/C/D=165-476"/>
</dbReference>
<dbReference type="PDB" id="3EPP">
    <property type="method" value="X-ray"/>
    <property type="resolution" value="2.41 A"/>
    <property type="chains" value="A/B=165-476"/>
</dbReference>
<dbReference type="PDB" id="5E8J">
    <property type="method" value="X-ray"/>
    <property type="resolution" value="2.35 A"/>
    <property type="chains" value="A/B=167-476"/>
</dbReference>
<dbReference type="PDB" id="5E9J">
    <property type="method" value="X-ray"/>
    <property type="resolution" value="3.47 A"/>
    <property type="chains" value="A/B=167-416, A/B=457-476"/>
</dbReference>
<dbReference type="PDB" id="5E9W">
    <property type="method" value="X-ray"/>
    <property type="resolution" value="2.28 A"/>
    <property type="chains" value="A/B/C/D=167-476"/>
</dbReference>
<dbReference type="PDB" id="8Q69">
    <property type="method" value="X-ray"/>
    <property type="resolution" value="1.96 A"/>
    <property type="chains" value="A/B=165-415, A/B=456-476"/>
</dbReference>
<dbReference type="PDB" id="8Q8G">
    <property type="method" value="X-ray"/>
    <property type="resolution" value="2.40 A"/>
    <property type="chains" value="A/B=165-415, A/B=456-476"/>
</dbReference>
<dbReference type="PDB" id="8Q9W">
    <property type="method" value="X-ray"/>
    <property type="resolution" value="2.50 A"/>
    <property type="chains" value="A/B=165-415, A/B=456-476"/>
</dbReference>
<dbReference type="PDBsum" id="3BGV"/>
<dbReference type="PDBsum" id="3EPP"/>
<dbReference type="PDBsum" id="5E8J"/>
<dbReference type="PDBsum" id="5E9J"/>
<dbReference type="PDBsum" id="5E9W"/>
<dbReference type="PDBsum" id="8Q69"/>
<dbReference type="PDBsum" id="8Q8G"/>
<dbReference type="PDBsum" id="8Q9W"/>
<dbReference type="SMR" id="O43148"/>
<dbReference type="BioGRID" id="114269">
    <property type="interactions" value="94"/>
</dbReference>
<dbReference type="ComplexPortal" id="CPX-8781">
    <property type="entry name" value="mRNA cap guanine-N7 methyltransferase complex"/>
</dbReference>
<dbReference type="FunCoup" id="O43148">
    <property type="interactions" value="3668"/>
</dbReference>
<dbReference type="IntAct" id="O43148">
    <property type="interactions" value="26"/>
</dbReference>
<dbReference type="MINT" id="O43148"/>
<dbReference type="STRING" id="9606.ENSP00000466111"/>
<dbReference type="BindingDB" id="O43148"/>
<dbReference type="ChEMBL" id="CHEMBL4295662"/>
<dbReference type="GlyGen" id="O43148">
    <property type="glycosylation" value="1 site, 1 O-linked glycan (1 site)"/>
</dbReference>
<dbReference type="iPTMnet" id="O43148"/>
<dbReference type="PhosphoSitePlus" id="O43148"/>
<dbReference type="SwissPalm" id="O43148"/>
<dbReference type="BioMuta" id="RNMT"/>
<dbReference type="jPOST" id="O43148"/>
<dbReference type="MassIVE" id="O43148"/>
<dbReference type="PaxDb" id="9606-ENSP00000372804"/>
<dbReference type="PeptideAtlas" id="O43148"/>
<dbReference type="ProteomicsDB" id="48765">
    <molecule id="O43148-1"/>
</dbReference>
<dbReference type="ProteomicsDB" id="48766">
    <molecule id="O43148-2"/>
</dbReference>
<dbReference type="Pumba" id="O43148"/>
<dbReference type="Antibodypedia" id="21962">
    <property type="antibodies" value="307 antibodies from 27 providers"/>
</dbReference>
<dbReference type="DNASU" id="8731"/>
<dbReference type="Ensembl" id="ENST00000262173.7">
    <molecule id="O43148-1"/>
    <property type="protein sequence ID" value="ENSP00000262173.3"/>
    <property type="gene ID" value="ENSG00000101654.18"/>
</dbReference>
<dbReference type="Ensembl" id="ENST00000383314.7">
    <molecule id="O43148-1"/>
    <property type="protein sequence ID" value="ENSP00000372804.2"/>
    <property type="gene ID" value="ENSG00000101654.18"/>
</dbReference>
<dbReference type="Ensembl" id="ENST00000543302.6">
    <molecule id="O43148-1"/>
    <property type="protein sequence ID" value="ENSP00000446426.1"/>
    <property type="gene ID" value="ENSG00000101654.18"/>
</dbReference>
<dbReference type="Ensembl" id="ENST00000589866.5">
    <molecule id="O43148-1"/>
    <property type="protein sequence ID" value="ENSP00000466252.1"/>
    <property type="gene ID" value="ENSG00000101654.18"/>
</dbReference>
<dbReference type="Ensembl" id="ENST00000592764.5">
    <molecule id="O43148-2"/>
    <property type="protein sequence ID" value="ENSP00000466111.1"/>
    <property type="gene ID" value="ENSG00000101654.18"/>
</dbReference>
<dbReference type="GeneID" id="8731"/>
<dbReference type="KEGG" id="hsa:8731"/>
<dbReference type="MANE-Select" id="ENST00000383314.7">
    <property type="protein sequence ID" value="ENSP00000372804.2"/>
    <property type="RefSeq nucleotide sequence ID" value="NM_003799.3"/>
    <property type="RefSeq protein sequence ID" value="NP_003790.1"/>
</dbReference>
<dbReference type="UCSC" id="uc002ksk.2">
    <molecule id="O43148-1"/>
    <property type="organism name" value="human"/>
</dbReference>
<dbReference type="AGR" id="HGNC:10075"/>
<dbReference type="CTD" id="8731"/>
<dbReference type="DisGeNET" id="8731"/>
<dbReference type="GeneCards" id="RNMT"/>
<dbReference type="HGNC" id="HGNC:10075">
    <property type="gene designation" value="RNMT"/>
</dbReference>
<dbReference type="HPA" id="ENSG00000101654">
    <property type="expression patterns" value="Low tissue specificity"/>
</dbReference>
<dbReference type="MIM" id="603514">
    <property type="type" value="gene"/>
</dbReference>
<dbReference type="neXtProt" id="NX_O43148"/>
<dbReference type="OpenTargets" id="ENSG00000101654"/>
<dbReference type="PharmGKB" id="PA34448"/>
<dbReference type="VEuPathDB" id="HostDB:ENSG00000101654"/>
<dbReference type="eggNOG" id="KOG1975">
    <property type="taxonomic scope" value="Eukaryota"/>
</dbReference>
<dbReference type="GeneTree" id="ENSGT00390000002368"/>
<dbReference type="HOGENOM" id="CLU_020346_0_1_1"/>
<dbReference type="InParanoid" id="O43148"/>
<dbReference type="OMA" id="LITGDCF"/>
<dbReference type="OrthoDB" id="10248867at2759"/>
<dbReference type="PAN-GO" id="O43148">
    <property type="GO annotations" value="4 GO annotations based on evolutionary models"/>
</dbReference>
<dbReference type="PhylomeDB" id="O43148"/>
<dbReference type="TreeFam" id="TF314347"/>
<dbReference type="BioCyc" id="MetaCyc:HS02296-MONOMER"/>
<dbReference type="BRENDA" id="2.1.1.56">
    <property type="organism ID" value="2681"/>
</dbReference>
<dbReference type="PathwayCommons" id="O43148"/>
<dbReference type="Reactome" id="R-HSA-167160">
    <property type="pathway name" value="RNA Pol II CTD phosphorylation and interaction with CE during HIV infection"/>
</dbReference>
<dbReference type="Reactome" id="R-HSA-72086">
    <property type="pathway name" value="mRNA Capping"/>
</dbReference>
<dbReference type="Reactome" id="R-HSA-77075">
    <property type="pathway name" value="RNA Pol II CTD phosphorylation and interaction with CE"/>
</dbReference>
<dbReference type="SignaLink" id="O43148"/>
<dbReference type="SIGNOR" id="O43148"/>
<dbReference type="BioGRID-ORCS" id="8731">
    <property type="hits" value="763 hits in 1180 CRISPR screens"/>
</dbReference>
<dbReference type="ChiTaRS" id="RNMT">
    <property type="organism name" value="human"/>
</dbReference>
<dbReference type="EvolutionaryTrace" id="O43148"/>
<dbReference type="GeneWiki" id="MRNA_(guanine-N7-)-methyltransferase"/>
<dbReference type="GeneWiki" id="RNMT"/>
<dbReference type="GenomeRNAi" id="8731"/>
<dbReference type="Pharos" id="O43148">
    <property type="development level" value="Tchem"/>
</dbReference>
<dbReference type="PRO" id="PR:O43148"/>
<dbReference type="Proteomes" id="UP000005640">
    <property type="component" value="Chromosome 18"/>
</dbReference>
<dbReference type="RNAct" id="O43148">
    <property type="molecule type" value="protein"/>
</dbReference>
<dbReference type="Bgee" id="ENSG00000101654">
    <property type="expression patterns" value="Expressed in male germ line stem cell (sensu Vertebrata) in testis and 201 other cell types or tissues"/>
</dbReference>
<dbReference type="ExpressionAtlas" id="O43148">
    <property type="expression patterns" value="baseline and differential"/>
</dbReference>
<dbReference type="GO" id="GO:0001650">
    <property type="term" value="C:fibrillar center"/>
    <property type="evidence" value="ECO:0000314"/>
    <property type="project" value="HPA"/>
</dbReference>
<dbReference type="GO" id="GO:0160130">
    <property type="term" value="C:mRNA cap methyltransferase RNMT:RAMAC complex"/>
    <property type="evidence" value="ECO:0000314"/>
    <property type="project" value="UniProtKB"/>
</dbReference>
<dbReference type="GO" id="GO:0031533">
    <property type="term" value="C:mRNA capping enzyme complex"/>
    <property type="evidence" value="ECO:0000314"/>
    <property type="project" value="UniProtKB"/>
</dbReference>
<dbReference type="GO" id="GO:0005654">
    <property type="term" value="C:nucleoplasm"/>
    <property type="evidence" value="ECO:0000314"/>
    <property type="project" value="HPA"/>
</dbReference>
<dbReference type="GO" id="GO:0005634">
    <property type="term" value="C:nucleus"/>
    <property type="evidence" value="ECO:0000314"/>
    <property type="project" value="UniProtKB"/>
</dbReference>
<dbReference type="GO" id="GO:0043235">
    <property type="term" value="C:receptor complex"/>
    <property type="evidence" value="ECO:0000314"/>
    <property type="project" value="MGI"/>
</dbReference>
<dbReference type="GO" id="GO:0004482">
    <property type="term" value="F:mRNA 5'-cap (guanine-N7-)-methyltransferase activity"/>
    <property type="evidence" value="ECO:0000314"/>
    <property type="project" value="UniProtKB"/>
</dbReference>
<dbReference type="GO" id="GO:0003723">
    <property type="term" value="F:RNA binding"/>
    <property type="evidence" value="ECO:0000315"/>
    <property type="project" value="UniProtKB"/>
</dbReference>
<dbReference type="GO" id="GO:0006370">
    <property type="term" value="P:7-methylguanosine mRNA capping"/>
    <property type="evidence" value="ECO:0000314"/>
    <property type="project" value="UniProtKB"/>
</dbReference>
<dbReference type="GO" id="GO:1990830">
    <property type="term" value="P:cellular response to leukemia inhibitory factor"/>
    <property type="evidence" value="ECO:0007669"/>
    <property type="project" value="Ensembl"/>
</dbReference>
<dbReference type="CDD" id="cd02440">
    <property type="entry name" value="AdoMet_MTases"/>
    <property type="match status" value="1"/>
</dbReference>
<dbReference type="Gene3D" id="3.40.50.150">
    <property type="entry name" value="Vaccinia Virus protein VP39"/>
    <property type="match status" value="1"/>
</dbReference>
<dbReference type="InterPro" id="IPR004971">
    <property type="entry name" value="mRNA_G-N7_MeTrfase_dom"/>
</dbReference>
<dbReference type="InterPro" id="IPR016899">
    <property type="entry name" value="mRNA_G-N7_MeTrfase_euk"/>
</dbReference>
<dbReference type="InterPro" id="IPR039753">
    <property type="entry name" value="RG7MT1"/>
</dbReference>
<dbReference type="InterPro" id="IPR029063">
    <property type="entry name" value="SAM-dependent_MTases_sf"/>
</dbReference>
<dbReference type="PANTHER" id="PTHR12189:SF2">
    <property type="entry name" value="MRNA CAP GUANINE-N7 METHYLTRANSFERASE"/>
    <property type="match status" value="1"/>
</dbReference>
<dbReference type="PANTHER" id="PTHR12189">
    <property type="entry name" value="MRNA GUANINE-7- METHYLTRANSFERASE"/>
    <property type="match status" value="1"/>
</dbReference>
<dbReference type="Pfam" id="PF03291">
    <property type="entry name" value="mRNA_G-N7_MeTrfase"/>
    <property type="match status" value="1"/>
</dbReference>
<dbReference type="PIRSF" id="PIRSF028762">
    <property type="entry name" value="ABD1"/>
    <property type="match status" value="1"/>
</dbReference>
<dbReference type="SUPFAM" id="SSF53335">
    <property type="entry name" value="S-adenosyl-L-methionine-dependent methyltransferases"/>
    <property type="match status" value="1"/>
</dbReference>
<dbReference type="PROSITE" id="PS51562">
    <property type="entry name" value="RNA_CAP0_MT"/>
    <property type="match status" value="1"/>
</dbReference>
<gene>
    <name type="primary">RNMT</name>
    <name type="synonym">KIAA0398</name>
</gene>
<proteinExistence type="evidence at protein level"/>
<accession>O43148</accession>
<accession>B0YJ90</accession>
<accession>D3DUJ5</accession>
<accession>O94996</accession>
<accession>Q9UIJ9</accession>
<keyword id="KW-0002">3D-structure</keyword>
<keyword id="KW-0025">Alternative splicing</keyword>
<keyword id="KW-0489">Methyltransferase</keyword>
<keyword id="KW-0506">mRNA capping</keyword>
<keyword id="KW-0507">mRNA processing</keyword>
<keyword id="KW-0539">Nucleus</keyword>
<keyword id="KW-0597">Phosphoprotein</keyword>
<keyword id="KW-1267">Proteomics identification</keyword>
<keyword id="KW-1185">Reference proteome</keyword>
<keyword id="KW-0694">RNA-binding</keyword>
<keyword id="KW-0949">S-adenosyl-L-methionine</keyword>
<keyword id="KW-0808">Transferase</keyword>
<name>MCES_HUMAN</name>
<sequence length="476" mass="54844">MANSAKAEEYEKMSLEQAKASVNSETESSFNINENTTASGTGLSEKTSVCRQVDIARKRKEFEDDLVKESSSCGKDTPSKKRKLDPEIVPEEKDCGDAEGNSKKRKRETEDVPKDKSSTGDGTQNKRKIALEDVPEKQKNLEEGHSSTVAAHYNELQEVGLEKRSQSRIFYLRNFNNWMKSVLIGEFLEKVRQKKKRDITVLDLGCGKGGDLLKWKKGRINKLVCTDIADVSVKQCQQRYEDMKNRRDSEYIFSAEFITADSSKELLIDKFRDPQMCFDICSCQFVCHYSFESYEQADMMLRNACERLSPGGYFIGTTPNSFELIRRLEASETESFGNEIYTVKFQKKGDYPLFGCKYDFNLEGVVDVPEFLVYFPLLNEMAKKYNMKLVYKKTFLEFYEEKIKNNENKMLLKRMQALEPYPANESSKLVSEKVDDYEHAAKYMKNSQVRLPLGTLSKSEWEATSIYLVFAFEKQQ</sequence>